<reference key="1">
    <citation type="journal article" date="1999" name="Eur. J. Biochem.">
        <title>Host defence peptides from the skin glands of the Australian blue mountains tree-frog Litoria citropa. Solution structure of the antibacterial peptide citropin 1.1.</title>
        <authorList>
            <person name="Wegener K.L."/>
            <person name="Wabnitz P.A."/>
            <person name="Carver J.A."/>
            <person name="Bowie J.H."/>
            <person name="Chia B.C.S."/>
            <person name="Wallace J.C."/>
            <person name="Tyler M.J."/>
        </authorList>
    </citation>
    <scope>PROTEIN SEQUENCE</scope>
    <scope>FUNCTION</scope>
    <scope>AMIDATION AT LEU-16</scope>
    <scope>SUBCELLULAR LOCATION</scope>
    <scope>STRUCTURE BY NMR</scope>
    <source>
        <tissue>Skin secretion</tissue>
    </source>
</reference>
<reference key="2">
    <citation type="journal article" date="2002" name="Eur. J. Biochem.">
        <title>Amphibian peptides that inhibit neuronal nitric oxide synthase. Isolation of lesuerin from the skin secretion of the Australian stony creek frog Litoria lesueuri.</title>
        <authorList>
            <person name="Doyle J."/>
            <person name="Llewellyn L.E."/>
            <person name="Brinkworth C.S."/>
            <person name="Bowie J.H."/>
            <person name="Wegener K.L."/>
            <person name="Rozek T."/>
            <person name="Wabnitz P.A."/>
            <person name="Wallace J.C."/>
            <person name="Tyler M.J."/>
        </authorList>
    </citation>
    <scope>FUNCTION</scope>
</reference>
<evidence type="ECO:0000269" key="1">
    <source>
    </source>
</evidence>
<evidence type="ECO:0000269" key="2">
    <source>
    </source>
</evidence>
<evidence type="ECO:0000303" key="3">
    <source>
    </source>
</evidence>
<evidence type="ECO:0000305" key="4">
    <source>
    </source>
</evidence>
<comment type="function">
    <text evidence="1 2">Bacteriostatic action for Gram-positive bacteria (PubMed:10504394). Strongly inhibits the formation of NO by neuronal nitric oxide synthase (nNOS) at micromolar concentrations (PubMed:11784303). Acts by a non-competitive mechanism, probably by binding to calcium/calmodulin and as a consequence blocking calmodulin attachment to nNOS (PubMed:11784303).</text>
</comment>
<comment type="subcellular location">
    <subcellularLocation>
        <location evidence="1">Secreted</location>
    </subcellularLocation>
</comment>
<comment type="tissue specificity">
    <text evidence="4">Expressed by the dorsal and submental skin glands.</text>
</comment>
<accession>P81835</accession>
<accession>P81836</accession>
<accession>P81837</accession>
<sequence>GLFDVIKKVASVIGGL</sequence>
<feature type="peptide" id="PRO_0000010190" description="Citropin-1.1" evidence="1">
    <location>
        <begin position="1"/>
        <end position="16"/>
    </location>
</feature>
<feature type="peptide" id="PRO_0000010191" description="Citropin-1.1.1" evidence="1">
    <location>
        <begin position="3"/>
        <end position="16"/>
    </location>
</feature>
<feature type="peptide" id="PRO_0000010192" description="Citropin-1.1.2" evidence="1">
    <location>
        <begin position="4"/>
        <end position="16"/>
    </location>
</feature>
<feature type="modified residue" description="Leucine amide" evidence="1">
    <location>
        <position position="16"/>
    </location>
</feature>
<protein>
    <recommendedName>
        <fullName evidence="3">Citropin-1.1</fullName>
    </recommendedName>
    <component>
        <recommendedName>
            <fullName evidence="3">Citropin-1.1.1</fullName>
        </recommendedName>
    </component>
    <component>
        <recommendedName>
            <fullName evidence="3">Citropin-1.1.2</fullName>
        </recommendedName>
    </component>
</protein>
<dbReference type="GO" id="GO:0005576">
    <property type="term" value="C:extracellular region"/>
    <property type="evidence" value="ECO:0007669"/>
    <property type="project" value="UniProtKB-SubCell"/>
</dbReference>
<dbReference type="GO" id="GO:0042742">
    <property type="term" value="P:defense response to bacterium"/>
    <property type="evidence" value="ECO:0007669"/>
    <property type="project" value="UniProtKB-KW"/>
</dbReference>
<dbReference type="GO" id="GO:0045087">
    <property type="term" value="P:innate immune response"/>
    <property type="evidence" value="ECO:0007669"/>
    <property type="project" value="UniProtKB-KW"/>
</dbReference>
<dbReference type="InterPro" id="IPR013157">
    <property type="entry name" value="Aurein_antimicrobial_peptide"/>
</dbReference>
<dbReference type="Pfam" id="PF08256">
    <property type="entry name" value="Antimicrobial20"/>
    <property type="match status" value="1"/>
</dbReference>
<name>CT11_RANCI</name>
<proteinExistence type="evidence at protein level"/>
<organism>
    <name type="scientific">Ranoidea citropa</name>
    <name type="common">Australian Blue Mountains tree frog</name>
    <name type="synonym">Litoria citropa</name>
    <dbReference type="NCBI Taxonomy" id="94770"/>
    <lineage>
        <taxon>Eukaryota</taxon>
        <taxon>Metazoa</taxon>
        <taxon>Chordata</taxon>
        <taxon>Craniata</taxon>
        <taxon>Vertebrata</taxon>
        <taxon>Euteleostomi</taxon>
        <taxon>Amphibia</taxon>
        <taxon>Batrachia</taxon>
        <taxon>Anura</taxon>
        <taxon>Neobatrachia</taxon>
        <taxon>Hyloidea</taxon>
        <taxon>Hylidae</taxon>
        <taxon>Pelodryadinae</taxon>
        <taxon>Ranoidea</taxon>
    </lineage>
</organism>
<keyword id="KW-0027">Amidation</keyword>
<keyword id="KW-0878">Amphibian defense peptide</keyword>
<keyword id="KW-0044">Antibiotic</keyword>
<keyword id="KW-0929">Antimicrobial</keyword>
<keyword id="KW-0903">Direct protein sequencing</keyword>
<keyword id="KW-0391">Immunity</keyword>
<keyword id="KW-0399">Innate immunity</keyword>
<keyword id="KW-0964">Secreted</keyword>